<protein>
    <recommendedName>
        <fullName>Probable sphingosine-1-phosphate phosphatase</fullName>
        <shortName>SPPase</shortName>
        <ecNumber>3.1.3.-</ecNumber>
    </recommendedName>
</protein>
<evidence type="ECO:0000250" key="1"/>
<evidence type="ECO:0000250" key="2">
    <source>
        <dbReference type="UniProtKB" id="P0A924"/>
    </source>
</evidence>
<evidence type="ECO:0000255" key="3"/>
<evidence type="ECO:0000305" key="4"/>
<proteinExistence type="inferred from homology"/>
<gene>
    <name type="primary">sppA</name>
    <name type="ORF">DDB_G0272260</name>
</gene>
<reference key="1">
    <citation type="journal article" date="2002" name="Nature">
        <title>Sequence and analysis of chromosome 2 of Dictyostelium discoideum.</title>
        <authorList>
            <person name="Gloeckner G."/>
            <person name="Eichinger L."/>
            <person name="Szafranski K."/>
            <person name="Pachebat J.A."/>
            <person name="Bankier A.T."/>
            <person name="Dear P.H."/>
            <person name="Lehmann R."/>
            <person name="Baumgart C."/>
            <person name="Parra G."/>
            <person name="Abril J.F."/>
            <person name="Guigo R."/>
            <person name="Kumpf K."/>
            <person name="Tunggal B."/>
            <person name="Cox E.C."/>
            <person name="Quail M.A."/>
            <person name="Platzer M."/>
            <person name="Rosenthal A."/>
            <person name="Noegel A.A."/>
        </authorList>
    </citation>
    <scope>NUCLEOTIDE SEQUENCE [LARGE SCALE GENOMIC DNA]</scope>
    <source>
        <strain>AX4</strain>
    </source>
</reference>
<reference key="2">
    <citation type="journal article" date="2005" name="Nature">
        <title>The genome of the social amoeba Dictyostelium discoideum.</title>
        <authorList>
            <person name="Eichinger L."/>
            <person name="Pachebat J.A."/>
            <person name="Gloeckner G."/>
            <person name="Rajandream M.A."/>
            <person name="Sucgang R."/>
            <person name="Berriman M."/>
            <person name="Song J."/>
            <person name="Olsen R."/>
            <person name="Szafranski K."/>
            <person name="Xu Q."/>
            <person name="Tunggal B."/>
            <person name="Kummerfeld S."/>
            <person name="Madera M."/>
            <person name="Konfortov B.A."/>
            <person name="Rivero F."/>
            <person name="Bankier A.T."/>
            <person name="Lehmann R."/>
            <person name="Hamlin N."/>
            <person name="Davies R."/>
            <person name="Gaudet P."/>
            <person name="Fey P."/>
            <person name="Pilcher K."/>
            <person name="Chen G."/>
            <person name="Saunders D."/>
            <person name="Sodergren E.J."/>
            <person name="Davis P."/>
            <person name="Kerhornou A."/>
            <person name="Nie X."/>
            <person name="Hall N."/>
            <person name="Anjard C."/>
            <person name="Hemphill L."/>
            <person name="Bason N."/>
            <person name="Farbrother P."/>
            <person name="Desany B."/>
            <person name="Just E."/>
            <person name="Morio T."/>
            <person name="Rost R."/>
            <person name="Churcher C.M."/>
            <person name="Cooper J."/>
            <person name="Haydock S."/>
            <person name="van Driessche N."/>
            <person name="Cronin A."/>
            <person name="Goodhead I."/>
            <person name="Muzny D.M."/>
            <person name="Mourier T."/>
            <person name="Pain A."/>
            <person name="Lu M."/>
            <person name="Harper D."/>
            <person name="Lindsay R."/>
            <person name="Hauser H."/>
            <person name="James K.D."/>
            <person name="Quiles M."/>
            <person name="Madan Babu M."/>
            <person name="Saito T."/>
            <person name="Buchrieser C."/>
            <person name="Wardroper A."/>
            <person name="Felder M."/>
            <person name="Thangavelu M."/>
            <person name="Johnson D."/>
            <person name="Knights A."/>
            <person name="Loulseged H."/>
            <person name="Mungall K.L."/>
            <person name="Oliver K."/>
            <person name="Price C."/>
            <person name="Quail M.A."/>
            <person name="Urushihara H."/>
            <person name="Hernandez J."/>
            <person name="Rabbinowitsch E."/>
            <person name="Steffen D."/>
            <person name="Sanders M."/>
            <person name="Ma J."/>
            <person name="Kohara Y."/>
            <person name="Sharp S."/>
            <person name="Simmonds M.N."/>
            <person name="Spiegler S."/>
            <person name="Tivey A."/>
            <person name="Sugano S."/>
            <person name="White B."/>
            <person name="Walker D."/>
            <person name="Woodward J.R."/>
            <person name="Winckler T."/>
            <person name="Tanaka Y."/>
            <person name="Shaulsky G."/>
            <person name="Schleicher M."/>
            <person name="Weinstock G.M."/>
            <person name="Rosenthal A."/>
            <person name="Cox E.C."/>
            <person name="Chisholm R.L."/>
            <person name="Gibbs R.A."/>
            <person name="Loomis W.F."/>
            <person name="Platzer M."/>
            <person name="Kay R.R."/>
            <person name="Williams J.G."/>
            <person name="Dear P.H."/>
            <person name="Noegel A.A."/>
            <person name="Barrell B.G."/>
            <person name="Kuspa A."/>
        </authorList>
    </citation>
    <scope>NUCLEOTIDE SEQUENCE [LARGE SCALE GENOMIC DNA]</scope>
    <source>
        <strain>AX4</strain>
    </source>
</reference>
<accession>Q55A00</accession>
<accession>Q86IM6</accession>
<accession>Q86IM7</accession>
<feature type="chain" id="PRO_0000365604" description="Probable sphingosine-1-phosphate phosphatase">
    <location>
        <begin position="1"/>
        <end position="406"/>
    </location>
</feature>
<feature type="transmembrane region" description="Helical" evidence="3">
    <location>
        <begin position="66"/>
        <end position="86"/>
    </location>
</feature>
<feature type="transmembrane region" description="Helical" evidence="3">
    <location>
        <begin position="92"/>
        <end position="112"/>
    </location>
</feature>
<feature type="transmembrane region" description="Helical" evidence="3">
    <location>
        <begin position="138"/>
        <end position="158"/>
    </location>
</feature>
<feature type="transmembrane region" description="Helical" evidence="3">
    <location>
        <begin position="162"/>
        <end position="182"/>
    </location>
</feature>
<feature type="transmembrane region" description="Helical" evidence="3">
    <location>
        <begin position="193"/>
        <end position="213"/>
    </location>
</feature>
<feature type="transmembrane region" description="Helical" evidence="3">
    <location>
        <begin position="225"/>
        <end position="245"/>
    </location>
</feature>
<feature type="transmembrane region" description="Helical" evidence="3">
    <location>
        <begin position="254"/>
        <end position="274"/>
    </location>
</feature>
<feature type="transmembrane region" description="Helical" evidence="3">
    <location>
        <begin position="313"/>
        <end position="333"/>
    </location>
</feature>
<feature type="transmembrane region" description="Helical" evidence="3">
    <location>
        <begin position="374"/>
        <end position="394"/>
    </location>
</feature>
<feature type="region of interest" description="Phosphatase sequence motif I" evidence="4">
    <location>
        <begin position="107"/>
        <end position="115"/>
    </location>
</feature>
<feature type="region of interest" description="Phosphatase sequence motif II" evidence="4">
    <location>
        <begin position="133"/>
        <end position="136"/>
    </location>
</feature>
<feature type="region of interest" description="Phosphatase sequence motif III" evidence="4">
    <location>
        <begin position="183"/>
        <end position="194"/>
    </location>
</feature>
<feature type="active site" description="Proton donor" evidence="2">
    <location>
        <position position="136"/>
    </location>
</feature>
<feature type="active site" description="Nucleophile" evidence="2">
    <location>
        <position position="190"/>
    </location>
</feature>
<feature type="site" description="Stabilizes the active site histidine for nucleophilic attack" evidence="2">
    <location>
        <position position="194"/>
    </location>
</feature>
<sequence length="406" mass="45887">MEKIKKQNNIGSYSSDKDGEYKKFRFSKTSIRGFLLKEYEREVPIIVKIQSYRNKFLDFYFKMASILGEEVFFILALPISTWCVATQLGVELCVVLALTIGGGNILKNTFTLPRPPPNIVWTNTAHQKDHGLPSTHTASAFGLTFYFLIYTYFLFPTIGESFNISLLSMFFIVLFWSTSVMFSRLYNGHHTPMDVIAGLIVAITSILATTYQLRYFIEGMVLSETFLFGPMLYIAILSAILFFHPQANTGPTPAYPETGLVCGASLGSLISLWLHAQHPCPLMNQELLLLEANYDSIVSTIHSIPLLLHGSRILIGLVLVGIAKVFSKKFFFFAYDLVIRANTNNEQSQPITTVSFDPNKKIIVTPTIEAFSKLFVYTCVSFTIVSMPYLFYYLNIQTSADVTRYY</sequence>
<organism>
    <name type="scientific">Dictyostelium discoideum</name>
    <name type="common">Social amoeba</name>
    <dbReference type="NCBI Taxonomy" id="44689"/>
    <lineage>
        <taxon>Eukaryota</taxon>
        <taxon>Amoebozoa</taxon>
        <taxon>Evosea</taxon>
        <taxon>Eumycetozoa</taxon>
        <taxon>Dictyostelia</taxon>
        <taxon>Dictyosteliales</taxon>
        <taxon>Dictyosteliaceae</taxon>
        <taxon>Dictyostelium</taxon>
    </lineage>
</organism>
<name>SSPA_DICDI</name>
<comment type="function">
    <text evidence="1">Has enzymatic activity against both sphingosine 1 phosphate (S1P) and dihydro-S1P. Regulates intracellular and extracellular S1P levels (By similarity).</text>
</comment>
<comment type="subcellular location">
    <subcellularLocation>
        <location evidence="1">Endoplasmic reticulum membrane</location>
        <topology evidence="1">Multi-pass membrane protein</topology>
    </subcellularLocation>
</comment>
<comment type="similarity">
    <text evidence="4">Belongs to the type 2 lipid phosphate phosphatase family.</text>
</comment>
<keyword id="KW-0256">Endoplasmic reticulum</keyword>
<keyword id="KW-0378">Hydrolase</keyword>
<keyword id="KW-0472">Membrane</keyword>
<keyword id="KW-1185">Reference proteome</keyword>
<keyword id="KW-0812">Transmembrane</keyword>
<keyword id="KW-1133">Transmembrane helix</keyword>
<dbReference type="EC" id="3.1.3.-"/>
<dbReference type="EMBL" id="AAFI02000008">
    <property type="protein sequence ID" value="EAL71282.1"/>
    <property type="molecule type" value="Genomic_DNA"/>
</dbReference>
<dbReference type="RefSeq" id="XP_645184.1">
    <property type="nucleotide sequence ID" value="XM_640092.1"/>
</dbReference>
<dbReference type="FunCoup" id="Q55A00">
    <property type="interactions" value="177"/>
</dbReference>
<dbReference type="STRING" id="44689.Q55A00"/>
<dbReference type="GlyGen" id="Q55A00">
    <property type="glycosylation" value="1 site"/>
</dbReference>
<dbReference type="PaxDb" id="44689-DDB0216187"/>
<dbReference type="EnsemblProtists" id="EAL71282">
    <property type="protein sequence ID" value="EAL71282"/>
    <property type="gene ID" value="DDB_G0272260"/>
</dbReference>
<dbReference type="GeneID" id="8618356"/>
<dbReference type="KEGG" id="ddi:DDB_G0272260"/>
<dbReference type="dictyBase" id="DDB_G0272260">
    <property type="gene designation" value="sppA"/>
</dbReference>
<dbReference type="VEuPathDB" id="AmoebaDB:DDB_G0272260"/>
<dbReference type="eggNOG" id="KOG2822">
    <property type="taxonomic scope" value="Eukaryota"/>
</dbReference>
<dbReference type="HOGENOM" id="CLU_678676_0_0_1"/>
<dbReference type="InParanoid" id="Q55A00"/>
<dbReference type="OMA" id="GRWEYPY"/>
<dbReference type="PhylomeDB" id="Q55A00"/>
<dbReference type="Reactome" id="R-DDI-9845614">
    <property type="pathway name" value="Sphingolipid catabolism"/>
</dbReference>
<dbReference type="PRO" id="PR:Q55A00"/>
<dbReference type="Proteomes" id="UP000002195">
    <property type="component" value="Chromosome 2"/>
</dbReference>
<dbReference type="GO" id="GO:0005783">
    <property type="term" value="C:endoplasmic reticulum"/>
    <property type="evidence" value="ECO:0000250"/>
    <property type="project" value="dictyBase"/>
</dbReference>
<dbReference type="GO" id="GO:0005789">
    <property type="term" value="C:endoplasmic reticulum membrane"/>
    <property type="evidence" value="ECO:0000318"/>
    <property type="project" value="GO_Central"/>
</dbReference>
<dbReference type="GO" id="GO:0042392">
    <property type="term" value="F:sphingosine-1-phosphate phosphatase activity"/>
    <property type="evidence" value="ECO:0000250"/>
    <property type="project" value="dictyBase"/>
</dbReference>
<dbReference type="GO" id="GO:0046839">
    <property type="term" value="P:phospholipid dephosphorylation"/>
    <property type="evidence" value="ECO:0000318"/>
    <property type="project" value="GO_Central"/>
</dbReference>
<dbReference type="CDD" id="cd03388">
    <property type="entry name" value="PAP2_SPPase1"/>
    <property type="match status" value="1"/>
</dbReference>
<dbReference type="Gene3D" id="1.20.144.10">
    <property type="entry name" value="Phosphatidic acid phosphatase type 2/haloperoxidase"/>
    <property type="match status" value="1"/>
</dbReference>
<dbReference type="InterPro" id="IPR036938">
    <property type="entry name" value="P_Acid_Pase_2/haloperoxi_sf"/>
</dbReference>
<dbReference type="InterPro" id="IPR000326">
    <property type="entry name" value="P_Acid_Pase_2/haloperoxidase"/>
</dbReference>
<dbReference type="PANTHER" id="PTHR14969:SF28">
    <property type="entry name" value="DIHYDROSPHINGOSINE 1-PHOSPHATE PHOSPHATASE LCB3-RELATED"/>
    <property type="match status" value="1"/>
</dbReference>
<dbReference type="PANTHER" id="PTHR14969">
    <property type="entry name" value="SPHINGOSINE-1-PHOSPHATE PHOSPHOHYDROLASE"/>
    <property type="match status" value="1"/>
</dbReference>
<dbReference type="Pfam" id="PF01569">
    <property type="entry name" value="PAP2"/>
    <property type="match status" value="1"/>
</dbReference>
<dbReference type="SMART" id="SM00014">
    <property type="entry name" value="acidPPc"/>
    <property type="match status" value="1"/>
</dbReference>
<dbReference type="SUPFAM" id="SSF48317">
    <property type="entry name" value="Acid phosphatase/Vanadium-dependent haloperoxidase"/>
    <property type="match status" value="1"/>
</dbReference>